<protein>
    <recommendedName>
        <fullName evidence="1">Hemin import ATP-binding protein HmuV</fullName>
        <ecNumber evidence="1">7.6.2.-</ecNumber>
    </recommendedName>
</protein>
<reference key="1">
    <citation type="submission" date="2006-08" db="EMBL/GenBank/DDBJ databases">
        <title>Complete sequence of chromosome 2 of Burkholderia cenocepacia HI2424.</title>
        <authorList>
            <person name="Copeland A."/>
            <person name="Lucas S."/>
            <person name="Lapidus A."/>
            <person name="Barry K."/>
            <person name="Detter J.C."/>
            <person name="Glavina del Rio T."/>
            <person name="Hammon N."/>
            <person name="Israni S."/>
            <person name="Pitluck S."/>
            <person name="Chain P."/>
            <person name="Malfatti S."/>
            <person name="Shin M."/>
            <person name="Vergez L."/>
            <person name="Schmutz J."/>
            <person name="Larimer F."/>
            <person name="Land M."/>
            <person name="Hauser L."/>
            <person name="Kyrpides N."/>
            <person name="Kim E."/>
            <person name="LiPuma J.J."/>
            <person name="Gonzalez C.F."/>
            <person name="Konstantinidis K."/>
            <person name="Tiedje J.M."/>
            <person name="Richardson P."/>
        </authorList>
    </citation>
    <scope>NUCLEOTIDE SEQUENCE [LARGE SCALE GENOMIC DNA]</scope>
    <source>
        <strain>HI2424</strain>
    </source>
</reference>
<evidence type="ECO:0000255" key="1">
    <source>
        <dbReference type="HAMAP-Rule" id="MF_01718"/>
    </source>
</evidence>
<sequence length="276" mass="29628">MLTAHHLDVARRHDTILRDLSLSIEPGRVTALLGRNGAGKSTLLKTFAGELTGSVAPHGVRVTGDVTLNGEPLARIDAPRLACLRAVLPQAAQPAFPFSVDEIVLLGRYPHARRSGARHVIAHRDRDIAWRALERAGADALVGRDVTTLSGGELARVQFARVLAQLWPDHDATESGPRYLLLDEPTAALDLAHQHRLLDTVRAVAREWQLGVLAIVHDPNLAARHADTIAMLADGTIVAHGAPRDVMTPAHIAQCYGFAVKMVETGDGTPPVMVPA</sequence>
<dbReference type="EC" id="7.6.2.-" evidence="1"/>
<dbReference type="EMBL" id="CP000459">
    <property type="protein sequence ID" value="ABK12168.1"/>
    <property type="molecule type" value="Genomic_DNA"/>
</dbReference>
<dbReference type="RefSeq" id="WP_011548986.1">
    <property type="nucleotide sequence ID" value="NC_008543.1"/>
</dbReference>
<dbReference type="SMR" id="A0B3E2"/>
<dbReference type="KEGG" id="bch:Bcen2424_5435"/>
<dbReference type="HOGENOM" id="CLU_000604_1_11_4"/>
<dbReference type="GO" id="GO:0005886">
    <property type="term" value="C:plasma membrane"/>
    <property type="evidence" value="ECO:0007669"/>
    <property type="project" value="UniProtKB-SubCell"/>
</dbReference>
<dbReference type="GO" id="GO:0005524">
    <property type="term" value="F:ATP binding"/>
    <property type="evidence" value="ECO:0007669"/>
    <property type="project" value="UniProtKB-KW"/>
</dbReference>
<dbReference type="GO" id="GO:0016887">
    <property type="term" value="F:ATP hydrolysis activity"/>
    <property type="evidence" value="ECO:0007669"/>
    <property type="project" value="InterPro"/>
</dbReference>
<dbReference type="CDD" id="cd03214">
    <property type="entry name" value="ABC_Iron-Siderophores_B12_Hemin"/>
    <property type="match status" value="1"/>
</dbReference>
<dbReference type="Gene3D" id="3.40.50.300">
    <property type="entry name" value="P-loop containing nucleotide triphosphate hydrolases"/>
    <property type="match status" value="1"/>
</dbReference>
<dbReference type="InterPro" id="IPR003593">
    <property type="entry name" value="AAA+_ATPase"/>
</dbReference>
<dbReference type="InterPro" id="IPR003439">
    <property type="entry name" value="ABC_transporter-like_ATP-bd"/>
</dbReference>
<dbReference type="InterPro" id="IPR017871">
    <property type="entry name" value="ABC_transporter-like_CS"/>
</dbReference>
<dbReference type="InterPro" id="IPR027417">
    <property type="entry name" value="P-loop_NTPase"/>
</dbReference>
<dbReference type="NCBIfam" id="NF010067">
    <property type="entry name" value="PRK13547.1"/>
    <property type="match status" value="1"/>
</dbReference>
<dbReference type="NCBIfam" id="NF010068">
    <property type="entry name" value="PRK13548.1"/>
    <property type="match status" value="1"/>
</dbReference>
<dbReference type="PANTHER" id="PTHR42794">
    <property type="entry name" value="HEMIN IMPORT ATP-BINDING PROTEIN HMUV"/>
    <property type="match status" value="1"/>
</dbReference>
<dbReference type="PANTHER" id="PTHR42794:SF1">
    <property type="entry name" value="HEMIN IMPORT ATP-BINDING PROTEIN HMUV"/>
    <property type="match status" value="1"/>
</dbReference>
<dbReference type="Pfam" id="PF00005">
    <property type="entry name" value="ABC_tran"/>
    <property type="match status" value="1"/>
</dbReference>
<dbReference type="SMART" id="SM00382">
    <property type="entry name" value="AAA"/>
    <property type="match status" value="1"/>
</dbReference>
<dbReference type="SUPFAM" id="SSF52540">
    <property type="entry name" value="P-loop containing nucleoside triphosphate hydrolases"/>
    <property type="match status" value="1"/>
</dbReference>
<dbReference type="PROSITE" id="PS00211">
    <property type="entry name" value="ABC_TRANSPORTER_1"/>
    <property type="match status" value="1"/>
</dbReference>
<dbReference type="PROSITE" id="PS50893">
    <property type="entry name" value="ABC_TRANSPORTER_2"/>
    <property type="match status" value="1"/>
</dbReference>
<dbReference type="PROSITE" id="PS51261">
    <property type="entry name" value="HMUV"/>
    <property type="match status" value="1"/>
</dbReference>
<feature type="chain" id="PRO_0000277701" description="Hemin import ATP-binding protein HmuV">
    <location>
        <begin position="1"/>
        <end position="276"/>
    </location>
</feature>
<feature type="domain" description="ABC transporter" evidence="1">
    <location>
        <begin position="2"/>
        <end position="259"/>
    </location>
</feature>
<feature type="binding site" evidence="1">
    <location>
        <begin position="34"/>
        <end position="41"/>
    </location>
    <ligand>
        <name>ATP</name>
        <dbReference type="ChEBI" id="CHEBI:30616"/>
    </ligand>
</feature>
<keyword id="KW-0067">ATP-binding</keyword>
<keyword id="KW-0997">Cell inner membrane</keyword>
<keyword id="KW-1003">Cell membrane</keyword>
<keyword id="KW-0472">Membrane</keyword>
<keyword id="KW-0547">Nucleotide-binding</keyword>
<keyword id="KW-1278">Translocase</keyword>
<keyword id="KW-0813">Transport</keyword>
<gene>
    <name evidence="1" type="primary">hmuV</name>
    <name type="ordered locus">Bcen2424_5435</name>
</gene>
<comment type="function">
    <text evidence="1">Part of the ABC transporter complex HmuTUV involved in hemin import. Responsible for energy coupling to the transport system.</text>
</comment>
<comment type="subunit">
    <text evidence="1">The complex is composed of two ATP-binding proteins (HmuV), two transmembrane proteins (HmuU) and a solute-binding protein (HmuT).</text>
</comment>
<comment type="subcellular location">
    <subcellularLocation>
        <location evidence="1">Cell inner membrane</location>
        <topology evidence="1">Peripheral membrane protein</topology>
    </subcellularLocation>
</comment>
<comment type="similarity">
    <text evidence="1">Belongs to the ABC transporter superfamily. Heme (hemin) importer (TC 3.A.1.14.5) family.</text>
</comment>
<name>HMUV_BURCH</name>
<organism>
    <name type="scientific">Burkholderia cenocepacia (strain HI2424)</name>
    <dbReference type="NCBI Taxonomy" id="331272"/>
    <lineage>
        <taxon>Bacteria</taxon>
        <taxon>Pseudomonadati</taxon>
        <taxon>Pseudomonadota</taxon>
        <taxon>Betaproteobacteria</taxon>
        <taxon>Burkholderiales</taxon>
        <taxon>Burkholderiaceae</taxon>
        <taxon>Burkholderia</taxon>
        <taxon>Burkholderia cepacia complex</taxon>
    </lineage>
</organism>
<accession>A0B3E2</accession>
<proteinExistence type="inferred from homology"/>